<name>HRCA_ONYPE</name>
<gene>
    <name evidence="1" type="primary">hrcA</name>
    <name type="ordered locus">PAM_706</name>
</gene>
<protein>
    <recommendedName>
        <fullName evidence="1">Heat-inducible transcription repressor HrcA</fullName>
    </recommendedName>
</protein>
<comment type="function">
    <text evidence="1">Negative regulator of class I heat shock genes (grpE-dnaK-dnaJ and groELS operons). Prevents heat-shock induction of these operons.</text>
</comment>
<comment type="similarity">
    <text evidence="1">Belongs to the HrcA family.</text>
</comment>
<feature type="chain" id="PRO_0000182517" description="Heat-inducible transcription repressor HrcA">
    <location>
        <begin position="1"/>
        <end position="342"/>
    </location>
</feature>
<evidence type="ECO:0000255" key="1">
    <source>
        <dbReference type="HAMAP-Rule" id="MF_00081"/>
    </source>
</evidence>
<dbReference type="EMBL" id="AP006628">
    <property type="protein sequence ID" value="BAD04791.1"/>
    <property type="molecule type" value="Genomic_DNA"/>
</dbReference>
<dbReference type="SMR" id="Q6YPL9"/>
<dbReference type="STRING" id="262768.PAM_706"/>
<dbReference type="KEGG" id="poy:PAM_706"/>
<dbReference type="eggNOG" id="COG1420">
    <property type="taxonomic scope" value="Bacteria"/>
</dbReference>
<dbReference type="HOGENOM" id="CLU_050019_1_0_14"/>
<dbReference type="BioCyc" id="OYEL262768:G1G26-859-MONOMER"/>
<dbReference type="Proteomes" id="UP000002523">
    <property type="component" value="Chromosome"/>
</dbReference>
<dbReference type="GO" id="GO:0003677">
    <property type="term" value="F:DNA binding"/>
    <property type="evidence" value="ECO:0007669"/>
    <property type="project" value="InterPro"/>
</dbReference>
<dbReference type="GO" id="GO:0045892">
    <property type="term" value="P:negative regulation of DNA-templated transcription"/>
    <property type="evidence" value="ECO:0007669"/>
    <property type="project" value="UniProtKB-UniRule"/>
</dbReference>
<dbReference type="Gene3D" id="3.30.450.40">
    <property type="match status" value="1"/>
</dbReference>
<dbReference type="Gene3D" id="3.30.390.60">
    <property type="entry name" value="Heat-inducible transcription repressor hrca homolog, domain 3"/>
    <property type="match status" value="1"/>
</dbReference>
<dbReference type="Gene3D" id="1.10.10.10">
    <property type="entry name" value="Winged helix-like DNA-binding domain superfamily/Winged helix DNA-binding domain"/>
    <property type="match status" value="1"/>
</dbReference>
<dbReference type="HAMAP" id="MF_00081">
    <property type="entry name" value="HrcA"/>
    <property type="match status" value="1"/>
</dbReference>
<dbReference type="InterPro" id="IPR029016">
    <property type="entry name" value="GAF-like_dom_sf"/>
</dbReference>
<dbReference type="InterPro" id="IPR002571">
    <property type="entry name" value="HrcA"/>
</dbReference>
<dbReference type="InterPro" id="IPR021153">
    <property type="entry name" value="HrcA_C"/>
</dbReference>
<dbReference type="InterPro" id="IPR036388">
    <property type="entry name" value="WH-like_DNA-bd_sf"/>
</dbReference>
<dbReference type="InterPro" id="IPR036390">
    <property type="entry name" value="WH_DNA-bd_sf"/>
</dbReference>
<dbReference type="InterPro" id="IPR023120">
    <property type="entry name" value="WHTH_transcript_rep_HrcA_IDD"/>
</dbReference>
<dbReference type="NCBIfam" id="TIGR00331">
    <property type="entry name" value="hrcA"/>
    <property type="match status" value="1"/>
</dbReference>
<dbReference type="PANTHER" id="PTHR34824">
    <property type="entry name" value="HEAT-INDUCIBLE TRANSCRIPTION REPRESSOR HRCA"/>
    <property type="match status" value="1"/>
</dbReference>
<dbReference type="PANTHER" id="PTHR34824:SF1">
    <property type="entry name" value="HEAT-INDUCIBLE TRANSCRIPTION REPRESSOR HRCA"/>
    <property type="match status" value="1"/>
</dbReference>
<dbReference type="Pfam" id="PF01628">
    <property type="entry name" value="HrcA"/>
    <property type="match status" value="1"/>
</dbReference>
<dbReference type="PIRSF" id="PIRSF005485">
    <property type="entry name" value="HrcA"/>
    <property type="match status" value="1"/>
</dbReference>
<dbReference type="SUPFAM" id="SSF55781">
    <property type="entry name" value="GAF domain-like"/>
    <property type="match status" value="1"/>
</dbReference>
<dbReference type="SUPFAM" id="SSF46785">
    <property type="entry name" value="Winged helix' DNA-binding domain"/>
    <property type="match status" value="1"/>
</dbReference>
<accession>Q6YPL9</accession>
<keyword id="KW-0678">Repressor</keyword>
<keyword id="KW-0346">Stress response</keyword>
<keyword id="KW-0804">Transcription</keyword>
<keyword id="KW-0805">Transcription regulation</keyword>
<organism>
    <name type="scientific">Onion yellows phytoplasma (strain OY-M)</name>
    <dbReference type="NCBI Taxonomy" id="262768"/>
    <lineage>
        <taxon>Bacteria</taxon>
        <taxon>Bacillati</taxon>
        <taxon>Mycoplasmatota</taxon>
        <taxon>Mollicutes</taxon>
        <taxon>Acholeplasmatales</taxon>
        <taxon>Acholeplasmataceae</taxon>
        <taxon>Candidatus Phytoplasma</taxon>
        <taxon>16SrI (Aster yellows group)</taxon>
    </lineage>
</organism>
<proteinExistence type="inferred from homology"/>
<sequence length="342" mass="39018">MMNMLSDRKKLILKAVVENYSQKGQPVGSKLLTHLPYLKFASATIRYDMVQLEKEGFLQKNHTSSGRVPSFKGYTYYLNHLLTRDHDVACMFESIDKVIQKKRFCKGQVIKEALSLLNNLTNYTAMAIGSDIFNNSKINKIDFIPLNSTQAVILIITDKGNVQHQNISLDQTKEISIYDLKDVVQVVNDLLTDKFLSEAANIIQSDFFKQTIAKYICFQEQLIALFMEVFSSFASENLYFSGVSKMLEKPELSNPEIIKKFMGLLERKELLKIMLNQDSLSFKFSDGLQLTPLKDCMILSIPFDVNPNEKGRIAVVGPSWMKYPKVIPILEYLAVHLSKLND</sequence>
<reference key="1">
    <citation type="journal article" date="2004" name="Nat. Genet.">
        <title>Reductive evolution suggested from the complete genome sequence of a plant-pathogenic phytoplasma.</title>
        <authorList>
            <person name="Oshima K."/>
            <person name="Kakizawa S."/>
            <person name="Nishigawa H."/>
            <person name="Jung H.-Y."/>
            <person name="Wei W."/>
            <person name="Suzuki S."/>
            <person name="Arashida R."/>
            <person name="Nakata D."/>
            <person name="Miyata S."/>
            <person name="Ugaki M."/>
            <person name="Namba S."/>
        </authorList>
    </citation>
    <scope>NUCLEOTIDE SEQUENCE [LARGE SCALE GENOMIC DNA]</scope>
    <source>
        <strain>OY-M</strain>
    </source>
</reference>